<feature type="chain" id="PRO_0000272417" description="Phosphate import ATP-binding protein PstB 2">
    <location>
        <begin position="1"/>
        <end position="289"/>
    </location>
</feature>
<feature type="domain" description="ABC transporter" evidence="1">
    <location>
        <begin position="37"/>
        <end position="276"/>
    </location>
</feature>
<feature type="binding site" evidence="1">
    <location>
        <begin position="69"/>
        <end position="76"/>
    </location>
    <ligand>
        <name>ATP</name>
        <dbReference type="ChEBI" id="CHEBI:30616"/>
    </ligand>
</feature>
<reference key="1">
    <citation type="journal article" date="2014" name="Stand. Genomic Sci.">
        <title>Complete genome sequence of Anabaena variabilis ATCC 29413.</title>
        <authorList>
            <person name="Thiel T."/>
            <person name="Pratte B.S."/>
            <person name="Zhong J."/>
            <person name="Goodwin L."/>
            <person name="Copeland A."/>
            <person name="Lucas S."/>
            <person name="Han C."/>
            <person name="Pitluck S."/>
            <person name="Land M.L."/>
            <person name="Kyrpides N.C."/>
            <person name="Woyke T."/>
        </authorList>
    </citation>
    <scope>NUCLEOTIDE SEQUENCE [LARGE SCALE GENOMIC DNA]</scope>
    <source>
        <strain>ATCC 29413 / PCC 7937</strain>
    </source>
</reference>
<protein>
    <recommendedName>
        <fullName evidence="1">Phosphate import ATP-binding protein PstB 2</fullName>
        <ecNumber evidence="1">7.3.2.1</ecNumber>
    </recommendedName>
    <alternativeName>
        <fullName evidence="1">ABC phosphate transporter 2</fullName>
    </alternativeName>
    <alternativeName>
        <fullName evidence="1">Phosphate-transporting ATPase 2</fullName>
    </alternativeName>
</protein>
<organism>
    <name type="scientific">Trichormus variabilis (strain ATCC 29413 / PCC 7937)</name>
    <name type="common">Anabaena variabilis</name>
    <dbReference type="NCBI Taxonomy" id="240292"/>
    <lineage>
        <taxon>Bacteria</taxon>
        <taxon>Bacillati</taxon>
        <taxon>Cyanobacteriota</taxon>
        <taxon>Cyanophyceae</taxon>
        <taxon>Nostocales</taxon>
        <taxon>Nostocaceae</taxon>
        <taxon>Trichormus</taxon>
    </lineage>
</organism>
<evidence type="ECO:0000255" key="1">
    <source>
        <dbReference type="HAMAP-Rule" id="MF_01702"/>
    </source>
</evidence>
<keyword id="KW-0067">ATP-binding</keyword>
<keyword id="KW-0997">Cell inner membrane</keyword>
<keyword id="KW-1003">Cell membrane</keyword>
<keyword id="KW-0472">Membrane</keyword>
<keyword id="KW-0547">Nucleotide-binding</keyword>
<keyword id="KW-0592">Phosphate transport</keyword>
<keyword id="KW-1278">Translocase</keyword>
<keyword id="KW-0813">Transport</keyword>
<comment type="function">
    <text evidence="1">Part of the ABC transporter complex PstSACB involved in phosphate import. Responsible for energy coupling to the transport system.</text>
</comment>
<comment type="catalytic activity">
    <reaction evidence="1">
        <text>phosphate(out) + ATP + H2O = ADP + 2 phosphate(in) + H(+)</text>
        <dbReference type="Rhea" id="RHEA:24440"/>
        <dbReference type="ChEBI" id="CHEBI:15377"/>
        <dbReference type="ChEBI" id="CHEBI:15378"/>
        <dbReference type="ChEBI" id="CHEBI:30616"/>
        <dbReference type="ChEBI" id="CHEBI:43474"/>
        <dbReference type="ChEBI" id="CHEBI:456216"/>
        <dbReference type="EC" id="7.3.2.1"/>
    </reaction>
</comment>
<comment type="subunit">
    <text evidence="1">The complex is composed of two ATP-binding proteins (PstB), two transmembrane proteins (PstC and PstA) and a solute-binding protein (PstS).</text>
</comment>
<comment type="subcellular location">
    <subcellularLocation>
        <location evidence="1">Cell inner membrane</location>
        <topology evidence="1">Peripheral membrane protein</topology>
    </subcellularLocation>
</comment>
<comment type="similarity">
    <text evidence="1">Belongs to the ABC transporter superfamily. Phosphate importer (TC 3.A.1.7) family.</text>
</comment>
<proteinExistence type="inferred from homology"/>
<name>PSTB2_TRIV2</name>
<accession>Q3MBW2</accession>
<gene>
    <name evidence="1" type="primary">pstB2</name>
    <name type="ordered locus">Ava_1902</name>
</gene>
<sequence length="289" mass="32947">MTIFTKNSVPLRARVETMSAFSLPSVNPSRADSEVILHAKVEAFYYDRFLALRNVYLPIYKNLITTLIGPSGCGKSTLLRCFNRLNDLIPQTRLQGQIIFKGRNIYHPLEDAVVLRRNIGMVFQKPNPFPKSIYNNVAFGLRIQGYRGDIDEIVEHSLRQAILWDEVKNKLKENALSLSGGQQQRLCIARMLAVQPEIILMDEPCSALDPTSTKQIEALIKEIKQQHTIVIVTHNMQQASRISDMTAFFNTEMIEGSRTGELVEYDHTPVIFQNPTREITRQYVNGYFG</sequence>
<dbReference type="EC" id="7.3.2.1" evidence="1"/>
<dbReference type="EMBL" id="CP000117">
    <property type="protein sequence ID" value="ABA21524.1"/>
    <property type="molecule type" value="Genomic_DNA"/>
</dbReference>
<dbReference type="SMR" id="Q3MBW2"/>
<dbReference type="STRING" id="240292.Ava_1902"/>
<dbReference type="KEGG" id="ava:Ava_1902"/>
<dbReference type="eggNOG" id="COG1117">
    <property type="taxonomic scope" value="Bacteria"/>
</dbReference>
<dbReference type="HOGENOM" id="CLU_000604_1_22_3"/>
<dbReference type="Proteomes" id="UP000002533">
    <property type="component" value="Chromosome"/>
</dbReference>
<dbReference type="GO" id="GO:0005886">
    <property type="term" value="C:plasma membrane"/>
    <property type="evidence" value="ECO:0007669"/>
    <property type="project" value="UniProtKB-SubCell"/>
</dbReference>
<dbReference type="GO" id="GO:0005524">
    <property type="term" value="F:ATP binding"/>
    <property type="evidence" value="ECO:0007669"/>
    <property type="project" value="UniProtKB-KW"/>
</dbReference>
<dbReference type="GO" id="GO:0016887">
    <property type="term" value="F:ATP hydrolysis activity"/>
    <property type="evidence" value="ECO:0007669"/>
    <property type="project" value="InterPro"/>
</dbReference>
<dbReference type="GO" id="GO:0015415">
    <property type="term" value="F:ATPase-coupled phosphate ion transmembrane transporter activity"/>
    <property type="evidence" value="ECO:0007669"/>
    <property type="project" value="UniProtKB-EC"/>
</dbReference>
<dbReference type="GO" id="GO:0035435">
    <property type="term" value="P:phosphate ion transmembrane transport"/>
    <property type="evidence" value="ECO:0007669"/>
    <property type="project" value="InterPro"/>
</dbReference>
<dbReference type="CDD" id="cd03260">
    <property type="entry name" value="ABC_PstB_phosphate_transporter"/>
    <property type="match status" value="1"/>
</dbReference>
<dbReference type="Gene3D" id="3.40.50.300">
    <property type="entry name" value="P-loop containing nucleotide triphosphate hydrolases"/>
    <property type="match status" value="1"/>
</dbReference>
<dbReference type="InterPro" id="IPR003593">
    <property type="entry name" value="AAA+_ATPase"/>
</dbReference>
<dbReference type="InterPro" id="IPR003439">
    <property type="entry name" value="ABC_transporter-like_ATP-bd"/>
</dbReference>
<dbReference type="InterPro" id="IPR017871">
    <property type="entry name" value="ABC_transporter-like_CS"/>
</dbReference>
<dbReference type="InterPro" id="IPR027417">
    <property type="entry name" value="P-loop_NTPase"/>
</dbReference>
<dbReference type="InterPro" id="IPR005670">
    <property type="entry name" value="PstB-like"/>
</dbReference>
<dbReference type="NCBIfam" id="TIGR00972">
    <property type="entry name" value="3a0107s01c2"/>
    <property type="match status" value="1"/>
</dbReference>
<dbReference type="PANTHER" id="PTHR43423">
    <property type="entry name" value="ABC TRANSPORTER I FAMILY MEMBER 17"/>
    <property type="match status" value="1"/>
</dbReference>
<dbReference type="PANTHER" id="PTHR43423:SF1">
    <property type="entry name" value="ABC TRANSPORTER I FAMILY MEMBER 17"/>
    <property type="match status" value="1"/>
</dbReference>
<dbReference type="Pfam" id="PF00005">
    <property type="entry name" value="ABC_tran"/>
    <property type="match status" value="1"/>
</dbReference>
<dbReference type="SMART" id="SM00382">
    <property type="entry name" value="AAA"/>
    <property type="match status" value="1"/>
</dbReference>
<dbReference type="SUPFAM" id="SSF52540">
    <property type="entry name" value="P-loop containing nucleoside triphosphate hydrolases"/>
    <property type="match status" value="1"/>
</dbReference>
<dbReference type="PROSITE" id="PS00211">
    <property type="entry name" value="ABC_TRANSPORTER_1"/>
    <property type="match status" value="1"/>
</dbReference>
<dbReference type="PROSITE" id="PS50893">
    <property type="entry name" value="ABC_TRANSPORTER_2"/>
    <property type="match status" value="1"/>
</dbReference>
<dbReference type="PROSITE" id="PS51238">
    <property type="entry name" value="PSTB"/>
    <property type="match status" value="1"/>
</dbReference>